<comment type="function">
    <text evidence="1">Catalyzes the hydrolysis of N-succinyl-L,L-diaminopimelic acid (SDAP), forming succinate and LL-2,6-diaminopimelate (DAP), an intermediate involved in the bacterial biosynthesis of lysine and meso-diaminopimelic acid, an essential component of bacterial cell walls.</text>
</comment>
<comment type="catalytic activity">
    <reaction evidence="1">
        <text>N-succinyl-(2S,6S)-2,6-diaminopimelate + H2O = (2S,6S)-2,6-diaminopimelate + succinate</text>
        <dbReference type="Rhea" id="RHEA:22608"/>
        <dbReference type="ChEBI" id="CHEBI:15377"/>
        <dbReference type="ChEBI" id="CHEBI:30031"/>
        <dbReference type="ChEBI" id="CHEBI:57609"/>
        <dbReference type="ChEBI" id="CHEBI:58087"/>
        <dbReference type="EC" id="3.5.1.18"/>
    </reaction>
</comment>
<comment type="cofactor">
    <cofactor evidence="1">
        <name>Zn(2+)</name>
        <dbReference type="ChEBI" id="CHEBI:29105"/>
    </cofactor>
    <cofactor evidence="1">
        <name>Co(2+)</name>
        <dbReference type="ChEBI" id="CHEBI:48828"/>
    </cofactor>
    <text evidence="1">Binds 2 Zn(2+) or Co(2+) ions per subunit.</text>
</comment>
<comment type="pathway">
    <text evidence="1">Amino-acid biosynthesis; L-lysine biosynthesis via DAP pathway; LL-2,6-diaminopimelate from (S)-tetrahydrodipicolinate (succinylase route): step 3/3.</text>
</comment>
<comment type="subunit">
    <text evidence="1">Homodimer.</text>
</comment>
<comment type="similarity">
    <text evidence="1">Belongs to the peptidase M20A family. DapE subfamily.</text>
</comment>
<protein>
    <recommendedName>
        <fullName evidence="1">Succinyl-diaminopimelate desuccinylase</fullName>
        <shortName evidence="1">SDAP desuccinylase</shortName>
        <ecNumber evidence="1">3.5.1.18</ecNumber>
    </recommendedName>
    <alternativeName>
        <fullName evidence="1">N-succinyl-LL-2,6-diaminoheptanedioate amidohydrolase</fullName>
    </alternativeName>
</protein>
<accession>B0BTF3</accession>
<sequence length="377" mass="40951">MKNNIINLAQDLIRRPSISPADQGCQQVIAERLAQLGFTLEWLPFGDTLNLWAKHGSGSPVVAFAGHTDVVPVGDETQWTYPPFEARIVDNMLYGRGAADMKGSLSALVVAAEEFVKANPNHTGTVALLITSDEEAAAKDGTVKVVETLMARGEPIHYCVVGEPSSGKVLGDVIKNGRRGSITGELYIEGVQGHVAYPHLAENPVHTSLNFLTELTTYQWDNGNEFFPPTSLQIANIKAGTGSNNVIPGELYVQFNLRYCTEVTDEIIKNKVAEMLAKHQLKHRISWNLSGQPFLAGNGELVKATVQAVENVTKITPRLDTSGGTSDGRFIALMGAEVVEFGPLNATIHKVNECVSVEDLGKCGEVYYHILERLLKS</sequence>
<gene>
    <name evidence="1" type="primary">dapE</name>
    <name type="ordered locus">APJL_1917</name>
</gene>
<reference key="1">
    <citation type="journal article" date="2008" name="PLoS ONE">
        <title>Genome biology of Actinobacillus pleuropneumoniae JL03, an isolate of serotype 3 prevalent in China.</title>
        <authorList>
            <person name="Xu Z."/>
            <person name="Zhou Y."/>
            <person name="Li L."/>
            <person name="Zhou R."/>
            <person name="Xiao S."/>
            <person name="Wan Y."/>
            <person name="Zhang S."/>
            <person name="Wang K."/>
            <person name="Li W."/>
            <person name="Li L."/>
            <person name="Jin H."/>
            <person name="Kang M."/>
            <person name="Dalai B."/>
            <person name="Li T."/>
            <person name="Liu L."/>
            <person name="Cheng Y."/>
            <person name="Zhang L."/>
            <person name="Xu T."/>
            <person name="Zheng H."/>
            <person name="Pu S."/>
            <person name="Wang B."/>
            <person name="Gu W."/>
            <person name="Zhang X.L."/>
            <person name="Zhu G.-F."/>
            <person name="Wang S."/>
            <person name="Zhao G.-P."/>
            <person name="Chen H."/>
        </authorList>
    </citation>
    <scope>NUCLEOTIDE SEQUENCE [LARGE SCALE GENOMIC DNA]</scope>
    <source>
        <strain>JL03</strain>
    </source>
</reference>
<organism>
    <name type="scientific">Actinobacillus pleuropneumoniae serotype 3 (strain JL03)</name>
    <dbReference type="NCBI Taxonomy" id="434271"/>
    <lineage>
        <taxon>Bacteria</taxon>
        <taxon>Pseudomonadati</taxon>
        <taxon>Pseudomonadota</taxon>
        <taxon>Gammaproteobacteria</taxon>
        <taxon>Pasteurellales</taxon>
        <taxon>Pasteurellaceae</taxon>
        <taxon>Actinobacillus</taxon>
    </lineage>
</organism>
<evidence type="ECO:0000255" key="1">
    <source>
        <dbReference type="HAMAP-Rule" id="MF_01690"/>
    </source>
</evidence>
<name>DAPE_ACTPJ</name>
<proteinExistence type="inferred from homology"/>
<feature type="chain" id="PRO_0000375449" description="Succinyl-diaminopimelate desuccinylase">
    <location>
        <begin position="1"/>
        <end position="377"/>
    </location>
</feature>
<feature type="active site" evidence="1">
    <location>
        <position position="69"/>
    </location>
</feature>
<feature type="active site" description="Proton acceptor" evidence="1">
    <location>
        <position position="134"/>
    </location>
</feature>
<feature type="binding site" evidence="1">
    <location>
        <position position="67"/>
    </location>
    <ligand>
        <name>Zn(2+)</name>
        <dbReference type="ChEBI" id="CHEBI:29105"/>
        <label>1</label>
    </ligand>
</feature>
<feature type="binding site" evidence="1">
    <location>
        <position position="100"/>
    </location>
    <ligand>
        <name>Zn(2+)</name>
        <dbReference type="ChEBI" id="CHEBI:29105"/>
        <label>1</label>
    </ligand>
</feature>
<feature type="binding site" evidence="1">
    <location>
        <position position="100"/>
    </location>
    <ligand>
        <name>Zn(2+)</name>
        <dbReference type="ChEBI" id="CHEBI:29105"/>
        <label>2</label>
    </ligand>
</feature>
<feature type="binding site" evidence="1">
    <location>
        <position position="135"/>
    </location>
    <ligand>
        <name>Zn(2+)</name>
        <dbReference type="ChEBI" id="CHEBI:29105"/>
        <label>2</label>
    </ligand>
</feature>
<feature type="binding site" evidence="1">
    <location>
        <position position="163"/>
    </location>
    <ligand>
        <name>Zn(2+)</name>
        <dbReference type="ChEBI" id="CHEBI:29105"/>
        <label>1</label>
    </ligand>
</feature>
<feature type="binding site" evidence="1">
    <location>
        <position position="349"/>
    </location>
    <ligand>
        <name>Zn(2+)</name>
        <dbReference type="ChEBI" id="CHEBI:29105"/>
        <label>2</label>
    </ligand>
</feature>
<keyword id="KW-0028">Amino-acid biosynthesis</keyword>
<keyword id="KW-0170">Cobalt</keyword>
<keyword id="KW-0220">Diaminopimelate biosynthesis</keyword>
<keyword id="KW-0378">Hydrolase</keyword>
<keyword id="KW-0457">Lysine biosynthesis</keyword>
<keyword id="KW-0479">Metal-binding</keyword>
<keyword id="KW-0862">Zinc</keyword>
<dbReference type="EC" id="3.5.1.18" evidence="1"/>
<dbReference type="EMBL" id="CP000687">
    <property type="protein sequence ID" value="ABY70467.1"/>
    <property type="molecule type" value="Genomic_DNA"/>
</dbReference>
<dbReference type="RefSeq" id="WP_012263431.1">
    <property type="nucleotide sequence ID" value="NC_010278.1"/>
</dbReference>
<dbReference type="SMR" id="B0BTF3"/>
<dbReference type="KEGG" id="apj:APJL_1917"/>
<dbReference type="HOGENOM" id="CLU_021802_4_0_6"/>
<dbReference type="UniPathway" id="UPA00034">
    <property type="reaction ID" value="UER00021"/>
</dbReference>
<dbReference type="Proteomes" id="UP000008547">
    <property type="component" value="Chromosome"/>
</dbReference>
<dbReference type="GO" id="GO:0008777">
    <property type="term" value="F:acetylornithine deacetylase activity"/>
    <property type="evidence" value="ECO:0007669"/>
    <property type="project" value="TreeGrafter"/>
</dbReference>
<dbReference type="GO" id="GO:0050897">
    <property type="term" value="F:cobalt ion binding"/>
    <property type="evidence" value="ECO:0007669"/>
    <property type="project" value="UniProtKB-UniRule"/>
</dbReference>
<dbReference type="GO" id="GO:0009014">
    <property type="term" value="F:succinyl-diaminopimelate desuccinylase activity"/>
    <property type="evidence" value="ECO:0007669"/>
    <property type="project" value="UniProtKB-UniRule"/>
</dbReference>
<dbReference type="GO" id="GO:0008270">
    <property type="term" value="F:zinc ion binding"/>
    <property type="evidence" value="ECO:0007669"/>
    <property type="project" value="UniProtKB-UniRule"/>
</dbReference>
<dbReference type="GO" id="GO:0019877">
    <property type="term" value="P:diaminopimelate biosynthetic process"/>
    <property type="evidence" value="ECO:0007669"/>
    <property type="project" value="UniProtKB-UniRule"/>
</dbReference>
<dbReference type="GO" id="GO:0006526">
    <property type="term" value="P:L-arginine biosynthetic process"/>
    <property type="evidence" value="ECO:0007669"/>
    <property type="project" value="TreeGrafter"/>
</dbReference>
<dbReference type="GO" id="GO:0009089">
    <property type="term" value="P:lysine biosynthetic process via diaminopimelate"/>
    <property type="evidence" value="ECO:0007669"/>
    <property type="project" value="UniProtKB-UniRule"/>
</dbReference>
<dbReference type="CDD" id="cd03891">
    <property type="entry name" value="M20_DapE_proteobac"/>
    <property type="match status" value="1"/>
</dbReference>
<dbReference type="FunFam" id="3.30.70.360:FF:000011">
    <property type="entry name" value="Succinyl-diaminopimelate desuccinylase"/>
    <property type="match status" value="1"/>
</dbReference>
<dbReference type="FunFam" id="3.40.630.10:FF:000005">
    <property type="entry name" value="Succinyl-diaminopimelate desuccinylase"/>
    <property type="match status" value="1"/>
</dbReference>
<dbReference type="Gene3D" id="1.10.150.900">
    <property type="match status" value="1"/>
</dbReference>
<dbReference type="Gene3D" id="3.30.70.360">
    <property type="match status" value="1"/>
</dbReference>
<dbReference type="Gene3D" id="3.40.630.10">
    <property type="entry name" value="Zn peptidases"/>
    <property type="match status" value="1"/>
</dbReference>
<dbReference type="HAMAP" id="MF_01690">
    <property type="entry name" value="DapE"/>
    <property type="match status" value="1"/>
</dbReference>
<dbReference type="InterPro" id="IPR001261">
    <property type="entry name" value="ArgE/DapE_CS"/>
</dbReference>
<dbReference type="InterPro" id="IPR036264">
    <property type="entry name" value="Bact_exopeptidase_dim_dom"/>
</dbReference>
<dbReference type="InterPro" id="IPR005941">
    <property type="entry name" value="DapE_proteobac"/>
</dbReference>
<dbReference type="InterPro" id="IPR002933">
    <property type="entry name" value="Peptidase_M20"/>
</dbReference>
<dbReference type="InterPro" id="IPR011650">
    <property type="entry name" value="Peptidase_M20_dimer"/>
</dbReference>
<dbReference type="InterPro" id="IPR050072">
    <property type="entry name" value="Peptidase_M20A"/>
</dbReference>
<dbReference type="NCBIfam" id="TIGR01246">
    <property type="entry name" value="dapE_proteo"/>
    <property type="match status" value="1"/>
</dbReference>
<dbReference type="NCBIfam" id="NF009557">
    <property type="entry name" value="PRK13009.1"/>
    <property type="match status" value="1"/>
</dbReference>
<dbReference type="PANTHER" id="PTHR43808">
    <property type="entry name" value="ACETYLORNITHINE DEACETYLASE"/>
    <property type="match status" value="1"/>
</dbReference>
<dbReference type="PANTHER" id="PTHR43808:SF31">
    <property type="entry name" value="N-ACETYL-L-CITRULLINE DEACETYLASE"/>
    <property type="match status" value="1"/>
</dbReference>
<dbReference type="Pfam" id="PF07687">
    <property type="entry name" value="M20_dimer"/>
    <property type="match status" value="1"/>
</dbReference>
<dbReference type="Pfam" id="PF01546">
    <property type="entry name" value="Peptidase_M20"/>
    <property type="match status" value="1"/>
</dbReference>
<dbReference type="SUPFAM" id="SSF55031">
    <property type="entry name" value="Bacterial exopeptidase dimerisation domain"/>
    <property type="match status" value="1"/>
</dbReference>
<dbReference type="SUPFAM" id="SSF53187">
    <property type="entry name" value="Zn-dependent exopeptidases"/>
    <property type="match status" value="1"/>
</dbReference>
<dbReference type="PROSITE" id="PS00758">
    <property type="entry name" value="ARGE_DAPE_CPG2_1"/>
    <property type="match status" value="1"/>
</dbReference>